<reference key="1">
    <citation type="journal article" date="2003" name="Proc. Natl. Acad. Sci. U.S.A.">
        <title>The complete genome sequence of the Arabidopsis and tomato pathogen Pseudomonas syringae pv. tomato DC3000.</title>
        <authorList>
            <person name="Buell C.R."/>
            <person name="Joardar V."/>
            <person name="Lindeberg M."/>
            <person name="Selengut J."/>
            <person name="Paulsen I.T."/>
            <person name="Gwinn M.L."/>
            <person name="Dodson R.J."/>
            <person name="DeBoy R.T."/>
            <person name="Durkin A.S."/>
            <person name="Kolonay J.F."/>
            <person name="Madupu R."/>
            <person name="Daugherty S.C."/>
            <person name="Brinkac L.M."/>
            <person name="Beanan M.J."/>
            <person name="Haft D.H."/>
            <person name="Nelson W.C."/>
            <person name="Davidsen T.M."/>
            <person name="Zafar N."/>
            <person name="Zhou L."/>
            <person name="Liu J."/>
            <person name="Yuan Q."/>
            <person name="Khouri H.M."/>
            <person name="Fedorova N.B."/>
            <person name="Tran B."/>
            <person name="Russell D."/>
            <person name="Berry K.J."/>
            <person name="Utterback T.R."/>
            <person name="Van Aken S.E."/>
            <person name="Feldblyum T.V."/>
            <person name="D'Ascenzo M."/>
            <person name="Deng W.-L."/>
            <person name="Ramos A.R."/>
            <person name="Alfano J.R."/>
            <person name="Cartinhour S."/>
            <person name="Chatterjee A.K."/>
            <person name="Delaney T.P."/>
            <person name="Lazarowitz S.G."/>
            <person name="Martin G.B."/>
            <person name="Schneider D.J."/>
            <person name="Tang X."/>
            <person name="Bender C.L."/>
            <person name="White O."/>
            <person name="Fraser C.M."/>
            <person name="Collmer A."/>
        </authorList>
    </citation>
    <scope>NUCLEOTIDE SEQUENCE [LARGE SCALE GENOMIC DNA]</scope>
    <source>
        <strain>ATCC BAA-871 / DC3000</strain>
    </source>
</reference>
<accession>Q886L6</accession>
<name>TRUD_PSESM</name>
<gene>
    <name evidence="1" type="primary">truD</name>
    <name type="ordered locus">PSPTO_1561</name>
</gene>
<protein>
    <recommendedName>
        <fullName evidence="1">tRNA pseudouridine synthase D</fullName>
        <ecNumber evidence="1">5.4.99.27</ecNumber>
    </recommendedName>
    <alternativeName>
        <fullName evidence="1">tRNA pseudouridine(13) synthase</fullName>
    </alternativeName>
    <alternativeName>
        <fullName evidence="1">tRNA pseudouridylate synthase D</fullName>
    </alternativeName>
    <alternativeName>
        <fullName evidence="1">tRNA-uridine isomerase D</fullName>
    </alternativeName>
</protein>
<evidence type="ECO:0000255" key="1">
    <source>
        <dbReference type="HAMAP-Rule" id="MF_01082"/>
    </source>
</evidence>
<dbReference type="EC" id="5.4.99.27" evidence="1"/>
<dbReference type="EMBL" id="AE016853">
    <property type="protein sequence ID" value="AAO55081.1"/>
    <property type="molecule type" value="Genomic_DNA"/>
</dbReference>
<dbReference type="RefSeq" id="NP_791386.1">
    <property type="nucleotide sequence ID" value="NC_004578.1"/>
</dbReference>
<dbReference type="RefSeq" id="WP_011103598.1">
    <property type="nucleotide sequence ID" value="NC_004578.1"/>
</dbReference>
<dbReference type="SMR" id="Q886L6"/>
<dbReference type="STRING" id="223283.PSPTO_1561"/>
<dbReference type="GeneID" id="1183198"/>
<dbReference type="KEGG" id="pst:PSPTO_1561"/>
<dbReference type="PATRIC" id="fig|223283.9.peg.1587"/>
<dbReference type="eggNOG" id="COG0585">
    <property type="taxonomic scope" value="Bacteria"/>
</dbReference>
<dbReference type="HOGENOM" id="CLU_005281_4_0_6"/>
<dbReference type="OrthoDB" id="1550679at2"/>
<dbReference type="PhylomeDB" id="Q886L6"/>
<dbReference type="Proteomes" id="UP000002515">
    <property type="component" value="Chromosome"/>
</dbReference>
<dbReference type="GO" id="GO:0005829">
    <property type="term" value="C:cytosol"/>
    <property type="evidence" value="ECO:0007669"/>
    <property type="project" value="TreeGrafter"/>
</dbReference>
<dbReference type="GO" id="GO:0003723">
    <property type="term" value="F:RNA binding"/>
    <property type="evidence" value="ECO:0007669"/>
    <property type="project" value="InterPro"/>
</dbReference>
<dbReference type="GO" id="GO:0160150">
    <property type="term" value="F:tRNA pseudouridine(13) synthase activity"/>
    <property type="evidence" value="ECO:0007669"/>
    <property type="project" value="UniProtKB-EC"/>
</dbReference>
<dbReference type="GO" id="GO:0031119">
    <property type="term" value="P:tRNA pseudouridine synthesis"/>
    <property type="evidence" value="ECO:0007669"/>
    <property type="project" value="UniProtKB-UniRule"/>
</dbReference>
<dbReference type="CDD" id="cd02575">
    <property type="entry name" value="PseudoU_synth_EcTruD"/>
    <property type="match status" value="1"/>
</dbReference>
<dbReference type="Gene3D" id="3.30.2350.20">
    <property type="entry name" value="TruD, catalytic domain"/>
    <property type="match status" value="1"/>
</dbReference>
<dbReference type="Gene3D" id="3.30.2340.10">
    <property type="entry name" value="TruD, insertion domain"/>
    <property type="match status" value="1"/>
</dbReference>
<dbReference type="HAMAP" id="MF_01082">
    <property type="entry name" value="TruD"/>
    <property type="match status" value="1"/>
</dbReference>
<dbReference type="InterPro" id="IPR020103">
    <property type="entry name" value="PsdUridine_synth_cat_dom_sf"/>
</dbReference>
<dbReference type="InterPro" id="IPR001656">
    <property type="entry name" value="PsdUridine_synth_TruD"/>
</dbReference>
<dbReference type="InterPro" id="IPR020119">
    <property type="entry name" value="PsdUridine_synth_TruD_CS"/>
</dbReference>
<dbReference type="InterPro" id="IPR011760">
    <property type="entry name" value="PsdUridine_synth_TruD_insert"/>
</dbReference>
<dbReference type="InterPro" id="IPR042214">
    <property type="entry name" value="TruD_catalytic"/>
</dbReference>
<dbReference type="InterPro" id="IPR043165">
    <property type="entry name" value="TruD_insert_sf"/>
</dbReference>
<dbReference type="InterPro" id="IPR050170">
    <property type="entry name" value="TruD_pseudoU_synthase"/>
</dbReference>
<dbReference type="NCBIfam" id="NF002153">
    <property type="entry name" value="PRK00984.1-2"/>
    <property type="match status" value="1"/>
</dbReference>
<dbReference type="PANTHER" id="PTHR47811">
    <property type="entry name" value="TRNA PSEUDOURIDINE SYNTHASE D"/>
    <property type="match status" value="1"/>
</dbReference>
<dbReference type="PANTHER" id="PTHR47811:SF1">
    <property type="entry name" value="TRNA PSEUDOURIDINE SYNTHASE D"/>
    <property type="match status" value="1"/>
</dbReference>
<dbReference type="Pfam" id="PF01142">
    <property type="entry name" value="TruD"/>
    <property type="match status" value="2"/>
</dbReference>
<dbReference type="SUPFAM" id="SSF55120">
    <property type="entry name" value="Pseudouridine synthase"/>
    <property type="match status" value="1"/>
</dbReference>
<dbReference type="PROSITE" id="PS50984">
    <property type="entry name" value="TRUD"/>
    <property type="match status" value="1"/>
</dbReference>
<dbReference type="PROSITE" id="PS01268">
    <property type="entry name" value="UPF0024"/>
    <property type="match status" value="1"/>
</dbReference>
<sequence>MNELELLGPRAYGDALGRAALKATAEDFQVDEVLDIPLSGDGEHLWLWVEKRGLNTVEAARRLARAAGVQLRTVSYAGLKDRQALTRQWFSIQLPGKADPDLSAAQDATLQILKSGRHKRKLQRGAHAANGFTLRLTQLEGDKEALNQRLETIALQGIPNYFGVQRFGYQGGNLGEARDYAGRKALPEQRAVRSRLLSTARSYLFNRVLAARVADGSWQKAQVGDLLAFTDSRSFFPADVDECSDPRLAILDLHPTGPQWGEGPSPAGGATAALENAIANDESVLRDWLVRAGMEHERRILRLPIGRLTWHYPEPDILQLEFVLPPGCFATVLVRELVDLVPVGQTDSPCVF</sequence>
<comment type="function">
    <text evidence="1">Responsible for synthesis of pseudouridine from uracil-13 in transfer RNAs.</text>
</comment>
<comment type="catalytic activity">
    <reaction evidence="1">
        <text>uridine(13) in tRNA = pseudouridine(13) in tRNA</text>
        <dbReference type="Rhea" id="RHEA:42540"/>
        <dbReference type="Rhea" id="RHEA-COMP:10105"/>
        <dbReference type="Rhea" id="RHEA-COMP:10106"/>
        <dbReference type="ChEBI" id="CHEBI:65314"/>
        <dbReference type="ChEBI" id="CHEBI:65315"/>
        <dbReference type="EC" id="5.4.99.27"/>
    </reaction>
</comment>
<comment type="similarity">
    <text evidence="1">Belongs to the pseudouridine synthase TruD family.</text>
</comment>
<keyword id="KW-0413">Isomerase</keyword>
<keyword id="KW-1185">Reference proteome</keyword>
<keyword id="KW-0819">tRNA processing</keyword>
<feature type="chain" id="PRO_0000152517" description="tRNA pseudouridine synthase D">
    <location>
        <begin position="1"/>
        <end position="352"/>
    </location>
</feature>
<feature type="domain" description="TRUD" evidence="1">
    <location>
        <begin position="157"/>
        <end position="303"/>
    </location>
</feature>
<feature type="active site" description="Nucleophile" evidence="1">
    <location>
        <position position="81"/>
    </location>
</feature>
<proteinExistence type="inferred from homology"/>
<organism>
    <name type="scientific">Pseudomonas syringae pv. tomato (strain ATCC BAA-871 / DC3000)</name>
    <dbReference type="NCBI Taxonomy" id="223283"/>
    <lineage>
        <taxon>Bacteria</taxon>
        <taxon>Pseudomonadati</taxon>
        <taxon>Pseudomonadota</taxon>
        <taxon>Gammaproteobacteria</taxon>
        <taxon>Pseudomonadales</taxon>
        <taxon>Pseudomonadaceae</taxon>
        <taxon>Pseudomonas</taxon>
    </lineage>
</organism>